<name>MKTX2_OLIMR</name>
<comment type="function">
    <text evidence="1">This protein markedly relaxes the rat carbachol-precontracted anococcygeus muscle. This relaxation is inhibited by the inhibitor of nitric oxide (NO) synthase, N-nitro-L-arginine methyl ester (L-NAME), suggesting that the response induced by this protein is NO-mediated (By similarity).</text>
</comment>
<comment type="subcellular location">
    <subcellularLocation>
        <location>Secreted</location>
    </subcellularLocation>
</comment>
<comment type="tissue specificity">
    <text>Expressed by the venom gland.</text>
</comment>
<comment type="domain">
    <text evidence="3">Has the structural arrangement of an alpha-helix connected to antiparallel beta-sheets by disulfide bonds (CS-alpha/beta).</text>
</comment>
<comment type="similarity">
    <text evidence="3">Belongs to the long (4 C-C) scorpion toxin superfamily. Sodium channel inhibitor family. Alpha subfamily.</text>
</comment>
<proteinExistence type="evidence at transcript level"/>
<evidence type="ECO:0000250" key="1"/>
<evidence type="ECO:0000255" key="2">
    <source>
        <dbReference type="PROSITE-ProRule" id="PRU01210"/>
    </source>
</evidence>
<evidence type="ECO:0000305" key="3"/>
<keyword id="KW-1015">Disulfide bond</keyword>
<keyword id="KW-0528">Neurotoxin</keyword>
<keyword id="KW-0964">Secreted</keyword>
<keyword id="KW-0732">Signal</keyword>
<keyword id="KW-0800">Toxin</keyword>
<sequence>MNYLIVISFALLLMTSVESGRDAYIADSENCTYFCGSNPYCNDLCTENGAKSGYCQWAGRYGNACWCIDLPDKVPIRIPGPCRGR</sequence>
<reference key="1">
    <citation type="journal article" date="2001" name="Toxicon">
        <title>Molecular cloning and sequence analysis of cDNAs encoding a beta-toxin-like peptide and two MkTx I homologues from scorpion Buthus martensii Karsch.</title>
        <authorList>
            <person name="Zeng X.-C."/>
            <person name="Li W.-X."/>
            <person name="Zhu S.-Y."/>
            <person name="Peng F."/>
            <person name="Zhu Z.-H."/>
            <person name="Liu H."/>
            <person name="Mao X."/>
        </authorList>
    </citation>
    <scope>NUCLEOTIDE SEQUENCE [MRNA]</scope>
    <source>
        <tissue>Venom gland</tissue>
    </source>
</reference>
<accession>Q86BW9</accession>
<feature type="signal peptide" evidence="1">
    <location>
        <begin position="1"/>
        <end position="19"/>
    </location>
</feature>
<feature type="chain" id="PRO_0000035260" description="Makatoxin-2">
    <location>
        <begin position="20"/>
        <end position="83"/>
    </location>
</feature>
<feature type="domain" description="LCN-type CS-alpha/beta" evidence="2">
    <location>
        <begin position="21"/>
        <end position="83"/>
    </location>
</feature>
<feature type="disulfide bond" evidence="2">
    <location>
        <begin position="31"/>
        <end position="82"/>
    </location>
</feature>
<feature type="disulfide bond" evidence="2">
    <location>
        <begin position="35"/>
        <end position="55"/>
    </location>
</feature>
<feature type="disulfide bond" evidence="2">
    <location>
        <begin position="41"/>
        <end position="65"/>
    </location>
</feature>
<feature type="disulfide bond" evidence="2">
    <location>
        <begin position="45"/>
        <end position="67"/>
    </location>
</feature>
<dbReference type="EMBL" id="AF153693">
    <property type="protein sequence ID" value="AAP33620.1"/>
    <property type="molecule type" value="mRNA"/>
</dbReference>
<dbReference type="SMR" id="Q86BW9"/>
<dbReference type="GO" id="GO:0005576">
    <property type="term" value="C:extracellular region"/>
    <property type="evidence" value="ECO:0007669"/>
    <property type="project" value="UniProtKB-SubCell"/>
</dbReference>
<dbReference type="GO" id="GO:0019871">
    <property type="term" value="F:sodium channel inhibitor activity"/>
    <property type="evidence" value="ECO:0007669"/>
    <property type="project" value="InterPro"/>
</dbReference>
<dbReference type="GO" id="GO:0090729">
    <property type="term" value="F:toxin activity"/>
    <property type="evidence" value="ECO:0007669"/>
    <property type="project" value="UniProtKB-KW"/>
</dbReference>
<dbReference type="GO" id="GO:0006952">
    <property type="term" value="P:defense response"/>
    <property type="evidence" value="ECO:0007669"/>
    <property type="project" value="InterPro"/>
</dbReference>
<dbReference type="CDD" id="cd23106">
    <property type="entry name" value="neurotoxins_LC_scorpion"/>
    <property type="match status" value="1"/>
</dbReference>
<dbReference type="FunFam" id="3.30.30.10:FF:000002">
    <property type="entry name" value="Alpha-like toxin BmK-M1"/>
    <property type="match status" value="1"/>
</dbReference>
<dbReference type="Gene3D" id="3.30.30.10">
    <property type="entry name" value="Knottin, scorpion toxin-like"/>
    <property type="match status" value="1"/>
</dbReference>
<dbReference type="InterPro" id="IPR044062">
    <property type="entry name" value="LCN-type_CS_alpha_beta_dom"/>
</dbReference>
<dbReference type="InterPro" id="IPR003614">
    <property type="entry name" value="Scorpion_toxin-like"/>
</dbReference>
<dbReference type="InterPro" id="IPR036574">
    <property type="entry name" value="Scorpion_toxin-like_sf"/>
</dbReference>
<dbReference type="InterPro" id="IPR018218">
    <property type="entry name" value="Scorpion_toxinL"/>
</dbReference>
<dbReference type="InterPro" id="IPR002061">
    <property type="entry name" value="Scorpion_toxinL/defensin"/>
</dbReference>
<dbReference type="Pfam" id="PF00537">
    <property type="entry name" value="Toxin_3"/>
    <property type="match status" value="1"/>
</dbReference>
<dbReference type="PRINTS" id="PR00285">
    <property type="entry name" value="SCORPNTOXIN"/>
</dbReference>
<dbReference type="PRINTS" id="PR00284">
    <property type="entry name" value="TOXIN"/>
</dbReference>
<dbReference type="SMART" id="SM00505">
    <property type="entry name" value="Knot1"/>
    <property type="match status" value="1"/>
</dbReference>
<dbReference type="SUPFAM" id="SSF57095">
    <property type="entry name" value="Scorpion toxin-like"/>
    <property type="match status" value="1"/>
</dbReference>
<dbReference type="PROSITE" id="PS51863">
    <property type="entry name" value="LCN_CSAB"/>
    <property type="match status" value="1"/>
</dbReference>
<organism>
    <name type="scientific">Olivierus martensii</name>
    <name type="common">Manchurian scorpion</name>
    <name type="synonym">Mesobuthus martensii</name>
    <dbReference type="NCBI Taxonomy" id="34649"/>
    <lineage>
        <taxon>Eukaryota</taxon>
        <taxon>Metazoa</taxon>
        <taxon>Ecdysozoa</taxon>
        <taxon>Arthropoda</taxon>
        <taxon>Chelicerata</taxon>
        <taxon>Arachnida</taxon>
        <taxon>Scorpiones</taxon>
        <taxon>Buthida</taxon>
        <taxon>Buthoidea</taxon>
        <taxon>Buthidae</taxon>
        <taxon>Olivierus</taxon>
    </lineage>
</organism>
<protein>
    <recommendedName>
        <fullName>Makatoxin-2</fullName>
    </recommendedName>
    <alternativeName>
        <fullName>Makatoxin II</fullName>
        <shortName>MKTXII</shortName>
        <shortName>MakatxII</shortName>
        <shortName>MkTx II</shortName>
    </alternativeName>
</protein>